<feature type="chain" id="PRO_0000162416" description="Regulatory protein RecX">
    <location>
        <begin position="1"/>
        <end position="270"/>
    </location>
</feature>
<accession>Q81I97</accession>
<organism>
    <name type="scientific">Bacillus cereus (strain ATCC 14579 / DSM 31 / CCUG 7414 / JCM 2152 / NBRC 15305 / NCIMB 9373 / NCTC 2599 / NRRL B-3711)</name>
    <dbReference type="NCBI Taxonomy" id="226900"/>
    <lineage>
        <taxon>Bacteria</taxon>
        <taxon>Bacillati</taxon>
        <taxon>Bacillota</taxon>
        <taxon>Bacilli</taxon>
        <taxon>Bacillales</taxon>
        <taxon>Bacillaceae</taxon>
        <taxon>Bacillus</taxon>
        <taxon>Bacillus cereus group</taxon>
    </lineage>
</organism>
<sequence length="270" mass="32258">MAVITKIEVQKRSKERFNIYIDKGQGEEYGFSVDQVILIKHGLQKGLEIDEIELGNILYNEEVQKAYLQAISYLSYQMRTKQEIEDFLRKKEVGQAIISEVVSKLLHDRYINDKEYAVLYTRTQSNVNRKGPTVIKRELLNKGVQDLIITHSLQEYPKEKQIENALFLIEKKKKSYQKHSFLQMKLKLDEMLVRKGYSREVIQICLEELKDEKDDEKQQEALHYHGNKYYEKYKKHDGWTFENKMKQALYRKGFSIDEIEIFLQMKREEE</sequence>
<comment type="function">
    <text evidence="1">Modulates RecA activity.</text>
</comment>
<comment type="subcellular location">
    <subcellularLocation>
        <location evidence="1">Cytoplasm</location>
    </subcellularLocation>
</comment>
<comment type="similarity">
    <text evidence="1">Belongs to the RecX family.</text>
</comment>
<gene>
    <name evidence="1" type="primary">recX</name>
    <name type="ordered locus">BC_0498</name>
</gene>
<dbReference type="EMBL" id="AE016877">
    <property type="protein sequence ID" value="AAP07536.1"/>
    <property type="molecule type" value="Genomic_DNA"/>
</dbReference>
<dbReference type="RefSeq" id="NP_830335.1">
    <property type="nucleotide sequence ID" value="NC_004722.1"/>
</dbReference>
<dbReference type="RefSeq" id="WP_000268502.1">
    <property type="nucleotide sequence ID" value="NZ_CP138336.1"/>
</dbReference>
<dbReference type="SMR" id="Q81I97"/>
<dbReference type="STRING" id="226900.BC_0498"/>
<dbReference type="KEGG" id="bce:BC0498"/>
<dbReference type="PATRIC" id="fig|226900.8.peg.470"/>
<dbReference type="HOGENOM" id="CLU_066607_4_0_9"/>
<dbReference type="OrthoDB" id="5421057at2"/>
<dbReference type="Proteomes" id="UP000001417">
    <property type="component" value="Chromosome"/>
</dbReference>
<dbReference type="GO" id="GO:0005737">
    <property type="term" value="C:cytoplasm"/>
    <property type="evidence" value="ECO:0007669"/>
    <property type="project" value="UniProtKB-SubCell"/>
</dbReference>
<dbReference type="GO" id="GO:0006282">
    <property type="term" value="P:regulation of DNA repair"/>
    <property type="evidence" value="ECO:0007669"/>
    <property type="project" value="UniProtKB-UniRule"/>
</dbReference>
<dbReference type="Gene3D" id="1.10.10.10">
    <property type="entry name" value="Winged helix-like DNA-binding domain superfamily/Winged helix DNA-binding domain"/>
    <property type="match status" value="4"/>
</dbReference>
<dbReference type="HAMAP" id="MF_01114">
    <property type="entry name" value="RecX"/>
    <property type="match status" value="1"/>
</dbReference>
<dbReference type="InterPro" id="IPR053926">
    <property type="entry name" value="RecX_HTH_1st"/>
</dbReference>
<dbReference type="InterPro" id="IPR053924">
    <property type="entry name" value="RecX_HTH_2nd"/>
</dbReference>
<dbReference type="InterPro" id="IPR053925">
    <property type="entry name" value="RecX_HTH_3rd"/>
</dbReference>
<dbReference type="InterPro" id="IPR003783">
    <property type="entry name" value="Regulatory_RecX"/>
</dbReference>
<dbReference type="InterPro" id="IPR036388">
    <property type="entry name" value="WH-like_DNA-bd_sf"/>
</dbReference>
<dbReference type="NCBIfam" id="NF010733">
    <property type="entry name" value="PRK14135.1"/>
    <property type="match status" value="1"/>
</dbReference>
<dbReference type="PANTHER" id="PTHR33602">
    <property type="entry name" value="REGULATORY PROTEIN RECX FAMILY PROTEIN"/>
    <property type="match status" value="1"/>
</dbReference>
<dbReference type="PANTHER" id="PTHR33602:SF1">
    <property type="entry name" value="REGULATORY PROTEIN RECX FAMILY PROTEIN"/>
    <property type="match status" value="1"/>
</dbReference>
<dbReference type="Pfam" id="PF21982">
    <property type="entry name" value="RecX_HTH1"/>
    <property type="match status" value="1"/>
</dbReference>
<dbReference type="Pfam" id="PF02631">
    <property type="entry name" value="RecX_HTH2"/>
    <property type="match status" value="1"/>
</dbReference>
<dbReference type="Pfam" id="PF21981">
    <property type="entry name" value="RecX_HTH3"/>
    <property type="match status" value="2"/>
</dbReference>
<evidence type="ECO:0000255" key="1">
    <source>
        <dbReference type="HAMAP-Rule" id="MF_01114"/>
    </source>
</evidence>
<proteinExistence type="inferred from homology"/>
<name>RECX_BACCR</name>
<reference key="1">
    <citation type="journal article" date="2003" name="Nature">
        <title>Genome sequence of Bacillus cereus and comparative analysis with Bacillus anthracis.</title>
        <authorList>
            <person name="Ivanova N."/>
            <person name="Sorokin A."/>
            <person name="Anderson I."/>
            <person name="Galleron N."/>
            <person name="Candelon B."/>
            <person name="Kapatral V."/>
            <person name="Bhattacharyya A."/>
            <person name="Reznik G."/>
            <person name="Mikhailova N."/>
            <person name="Lapidus A."/>
            <person name="Chu L."/>
            <person name="Mazur M."/>
            <person name="Goltsman E."/>
            <person name="Larsen N."/>
            <person name="D'Souza M."/>
            <person name="Walunas T."/>
            <person name="Grechkin Y."/>
            <person name="Pusch G."/>
            <person name="Haselkorn R."/>
            <person name="Fonstein M."/>
            <person name="Ehrlich S.D."/>
            <person name="Overbeek R."/>
            <person name="Kyrpides N.C."/>
        </authorList>
    </citation>
    <scope>NUCLEOTIDE SEQUENCE [LARGE SCALE GENOMIC DNA]</scope>
    <source>
        <strain>ATCC 14579 / DSM 31 / CCUG 7414 / JCM 2152 / NBRC 15305 / NCIMB 9373 / NCTC 2599 / NRRL B-3711</strain>
    </source>
</reference>
<protein>
    <recommendedName>
        <fullName evidence="1">Regulatory protein RecX</fullName>
    </recommendedName>
</protein>
<keyword id="KW-0963">Cytoplasm</keyword>
<keyword id="KW-1185">Reference proteome</keyword>